<name>RL29_STRPD</name>
<reference key="1">
    <citation type="journal article" date="2006" name="Proc. Natl. Acad. Sci. U.S.A.">
        <title>Molecular genetic anatomy of inter- and intraserotype variation in the human bacterial pathogen group A Streptococcus.</title>
        <authorList>
            <person name="Beres S.B."/>
            <person name="Richter E.W."/>
            <person name="Nagiec M.J."/>
            <person name="Sumby P."/>
            <person name="Porcella S.F."/>
            <person name="DeLeo F.R."/>
            <person name="Musser J.M."/>
        </authorList>
    </citation>
    <scope>NUCLEOTIDE SEQUENCE [LARGE SCALE GENOMIC DNA]</scope>
    <source>
        <strain>MGAS10270</strain>
    </source>
</reference>
<protein>
    <recommendedName>
        <fullName evidence="1">Large ribosomal subunit protein uL29</fullName>
    </recommendedName>
    <alternativeName>
        <fullName evidence="2">50S ribosomal protein L29</fullName>
    </alternativeName>
</protein>
<sequence>MKLQEIKDFVKELRGLSQEELAKKENELKKELFDLRFQAAAGQLEKTARLDEVKKQIARVKTVQSEMK</sequence>
<accession>Q1JJ54</accession>
<keyword id="KW-0687">Ribonucleoprotein</keyword>
<keyword id="KW-0689">Ribosomal protein</keyword>
<organism>
    <name type="scientific">Streptococcus pyogenes serotype M2 (strain MGAS10270)</name>
    <dbReference type="NCBI Taxonomy" id="370552"/>
    <lineage>
        <taxon>Bacteria</taxon>
        <taxon>Bacillati</taxon>
        <taxon>Bacillota</taxon>
        <taxon>Bacilli</taxon>
        <taxon>Lactobacillales</taxon>
        <taxon>Streptococcaceae</taxon>
        <taxon>Streptococcus</taxon>
    </lineage>
</organism>
<gene>
    <name evidence="1" type="primary">rpmC</name>
    <name type="ordered locus">MGAS10270_Spy0054</name>
</gene>
<feature type="chain" id="PRO_1000007626" description="Large ribosomal subunit protein uL29">
    <location>
        <begin position="1"/>
        <end position="68"/>
    </location>
</feature>
<comment type="similarity">
    <text evidence="1">Belongs to the universal ribosomal protein uL29 family.</text>
</comment>
<evidence type="ECO:0000255" key="1">
    <source>
        <dbReference type="HAMAP-Rule" id="MF_00374"/>
    </source>
</evidence>
<evidence type="ECO:0000305" key="2"/>
<proteinExistence type="inferred from homology"/>
<dbReference type="EMBL" id="CP000260">
    <property type="protein sequence ID" value="ABF33119.1"/>
    <property type="molecule type" value="Genomic_DNA"/>
</dbReference>
<dbReference type="RefSeq" id="WP_000775731.1">
    <property type="nucleotide sequence ID" value="NZ_CVUH01000001.1"/>
</dbReference>
<dbReference type="SMR" id="Q1JJ54"/>
<dbReference type="GeneID" id="69900034"/>
<dbReference type="KEGG" id="sph:MGAS10270_Spy0054"/>
<dbReference type="HOGENOM" id="CLU_158491_5_2_9"/>
<dbReference type="Proteomes" id="UP000002436">
    <property type="component" value="Chromosome"/>
</dbReference>
<dbReference type="GO" id="GO:0022625">
    <property type="term" value="C:cytosolic large ribosomal subunit"/>
    <property type="evidence" value="ECO:0007669"/>
    <property type="project" value="TreeGrafter"/>
</dbReference>
<dbReference type="GO" id="GO:0003735">
    <property type="term" value="F:structural constituent of ribosome"/>
    <property type="evidence" value="ECO:0007669"/>
    <property type="project" value="InterPro"/>
</dbReference>
<dbReference type="GO" id="GO:0006412">
    <property type="term" value="P:translation"/>
    <property type="evidence" value="ECO:0007669"/>
    <property type="project" value="UniProtKB-UniRule"/>
</dbReference>
<dbReference type="CDD" id="cd00427">
    <property type="entry name" value="Ribosomal_L29_HIP"/>
    <property type="match status" value="1"/>
</dbReference>
<dbReference type="FunFam" id="1.10.287.310:FF:000001">
    <property type="entry name" value="50S ribosomal protein L29"/>
    <property type="match status" value="1"/>
</dbReference>
<dbReference type="Gene3D" id="1.10.287.310">
    <property type="match status" value="1"/>
</dbReference>
<dbReference type="HAMAP" id="MF_00374">
    <property type="entry name" value="Ribosomal_uL29"/>
    <property type="match status" value="1"/>
</dbReference>
<dbReference type="InterPro" id="IPR050063">
    <property type="entry name" value="Ribosomal_protein_uL29"/>
</dbReference>
<dbReference type="InterPro" id="IPR001854">
    <property type="entry name" value="Ribosomal_uL29"/>
</dbReference>
<dbReference type="InterPro" id="IPR018254">
    <property type="entry name" value="Ribosomal_uL29_CS"/>
</dbReference>
<dbReference type="InterPro" id="IPR036049">
    <property type="entry name" value="Ribosomal_uL29_sf"/>
</dbReference>
<dbReference type="NCBIfam" id="TIGR00012">
    <property type="entry name" value="L29"/>
    <property type="match status" value="1"/>
</dbReference>
<dbReference type="PANTHER" id="PTHR10916">
    <property type="entry name" value="60S RIBOSOMAL PROTEIN L35/50S RIBOSOMAL PROTEIN L29"/>
    <property type="match status" value="1"/>
</dbReference>
<dbReference type="PANTHER" id="PTHR10916:SF0">
    <property type="entry name" value="LARGE RIBOSOMAL SUBUNIT PROTEIN UL29C"/>
    <property type="match status" value="1"/>
</dbReference>
<dbReference type="Pfam" id="PF00831">
    <property type="entry name" value="Ribosomal_L29"/>
    <property type="match status" value="1"/>
</dbReference>
<dbReference type="SUPFAM" id="SSF46561">
    <property type="entry name" value="Ribosomal protein L29 (L29p)"/>
    <property type="match status" value="1"/>
</dbReference>
<dbReference type="PROSITE" id="PS00579">
    <property type="entry name" value="RIBOSOMAL_L29"/>
    <property type="match status" value="1"/>
</dbReference>